<name>Y1550_BACVZ</name>
<proteinExistence type="inferred from homology"/>
<evidence type="ECO:0000255" key="1">
    <source>
        <dbReference type="HAMAP-Rule" id="MF_01503"/>
    </source>
</evidence>
<dbReference type="EMBL" id="CP000560">
    <property type="protein sequence ID" value="ABS73913.1"/>
    <property type="molecule type" value="Genomic_DNA"/>
</dbReference>
<dbReference type="SMR" id="A7Z4I7"/>
<dbReference type="GeneID" id="93080683"/>
<dbReference type="KEGG" id="bay:RBAM_015500"/>
<dbReference type="HOGENOM" id="CLU_165326_0_0_9"/>
<dbReference type="Proteomes" id="UP000001120">
    <property type="component" value="Chromosome"/>
</dbReference>
<dbReference type="HAMAP" id="MF_01503">
    <property type="entry name" value="RemA"/>
    <property type="match status" value="1"/>
</dbReference>
<dbReference type="InterPro" id="IPR007169">
    <property type="entry name" value="RemA-like"/>
</dbReference>
<dbReference type="NCBIfam" id="NF046064">
    <property type="entry name" value="MtxBflmRegRemA"/>
    <property type="match status" value="1"/>
</dbReference>
<dbReference type="NCBIfam" id="NF003315">
    <property type="entry name" value="PRK04323.1"/>
    <property type="match status" value="1"/>
</dbReference>
<dbReference type="PANTHER" id="PTHR38449:SF1">
    <property type="entry name" value="REGULATORY PROTEIN SSL2874-RELATED"/>
    <property type="match status" value="1"/>
</dbReference>
<dbReference type="PANTHER" id="PTHR38449">
    <property type="entry name" value="REGULATORY PROTEIN TM_1690-RELATED"/>
    <property type="match status" value="1"/>
</dbReference>
<dbReference type="Pfam" id="PF04025">
    <property type="entry name" value="RemA-like"/>
    <property type="match status" value="1"/>
</dbReference>
<gene>
    <name type="ordered locus">RBAM_015500</name>
</gene>
<accession>A7Z4I7</accession>
<sequence>MTIKLINIGFGNIISANRMISIVSPESAPIKRMIQDARDRGMLIDATYGRRTRAVVVMDSDHIILSAVQPETVAHRLSVKEEIMDEGQG</sequence>
<feature type="chain" id="PRO_0000315202" description="Putative regulatory protein RBAM_015500">
    <location>
        <begin position="1"/>
        <end position="89"/>
    </location>
</feature>
<protein>
    <recommendedName>
        <fullName evidence="1">Putative regulatory protein RBAM_015500</fullName>
    </recommendedName>
</protein>
<reference key="1">
    <citation type="journal article" date="2007" name="Nat. Biotechnol.">
        <title>Comparative analysis of the complete genome sequence of the plant growth-promoting bacterium Bacillus amyloliquefaciens FZB42.</title>
        <authorList>
            <person name="Chen X.H."/>
            <person name="Koumoutsi A."/>
            <person name="Scholz R."/>
            <person name="Eisenreich A."/>
            <person name="Schneider K."/>
            <person name="Heinemeyer I."/>
            <person name="Morgenstern B."/>
            <person name="Voss B."/>
            <person name="Hess W.R."/>
            <person name="Reva O."/>
            <person name="Junge H."/>
            <person name="Voigt B."/>
            <person name="Jungblut P.R."/>
            <person name="Vater J."/>
            <person name="Suessmuth R."/>
            <person name="Liesegang H."/>
            <person name="Strittmatter A."/>
            <person name="Gottschalk G."/>
            <person name="Borriss R."/>
        </authorList>
    </citation>
    <scope>NUCLEOTIDE SEQUENCE [LARGE SCALE GENOMIC DNA]</scope>
    <source>
        <strain>DSM 23117 / BGSC 10A6 / LMG 26770 / FZB42</strain>
    </source>
</reference>
<comment type="similarity">
    <text evidence="1">Belongs to the RemA family.</text>
</comment>
<organism>
    <name type="scientific">Bacillus velezensis (strain DSM 23117 / BGSC 10A6 / LMG 26770 / FZB42)</name>
    <name type="common">Bacillus amyloliquefaciens subsp. plantarum</name>
    <dbReference type="NCBI Taxonomy" id="326423"/>
    <lineage>
        <taxon>Bacteria</taxon>
        <taxon>Bacillati</taxon>
        <taxon>Bacillota</taxon>
        <taxon>Bacilli</taxon>
        <taxon>Bacillales</taxon>
        <taxon>Bacillaceae</taxon>
        <taxon>Bacillus</taxon>
        <taxon>Bacillus amyloliquefaciens group</taxon>
    </lineage>
</organism>